<dbReference type="EC" id="4.-.-.-"/>
<dbReference type="EMBL" id="AL445066">
    <property type="protein sequence ID" value="CAC12282.1"/>
    <property type="molecule type" value="Genomic_DNA"/>
</dbReference>
<dbReference type="RefSeq" id="WP_010901564.1">
    <property type="nucleotide sequence ID" value="NC_002578.1"/>
</dbReference>
<dbReference type="SMR" id="Q9HJ17"/>
<dbReference type="FunCoup" id="Q9HJ17">
    <property type="interactions" value="104"/>
</dbReference>
<dbReference type="STRING" id="273075.gene:9572378"/>
<dbReference type="PaxDb" id="273075-Ta1157"/>
<dbReference type="DNASU" id="1456657"/>
<dbReference type="EnsemblBacteria" id="CAC12282">
    <property type="protein sequence ID" value="CAC12282"/>
    <property type="gene ID" value="CAC12282"/>
</dbReference>
<dbReference type="KEGG" id="tac:Ta1157"/>
<dbReference type="eggNOG" id="arCOG04172">
    <property type="taxonomic scope" value="Archaea"/>
</dbReference>
<dbReference type="HOGENOM" id="CLU_049343_5_1_2"/>
<dbReference type="InParanoid" id="Q9HJ17"/>
<dbReference type="OrthoDB" id="33636at2157"/>
<dbReference type="Proteomes" id="UP000001024">
    <property type="component" value="Chromosome"/>
</dbReference>
<dbReference type="GO" id="GO:0005737">
    <property type="term" value="C:cytoplasm"/>
    <property type="evidence" value="ECO:0007669"/>
    <property type="project" value="UniProtKB-SubCell"/>
</dbReference>
<dbReference type="GO" id="GO:0008675">
    <property type="term" value="F:2-dehydro-3-deoxy-phosphogluconate aldolase activity"/>
    <property type="evidence" value="ECO:0007669"/>
    <property type="project" value="UniProtKB-ARBA"/>
</dbReference>
<dbReference type="GO" id="GO:0008840">
    <property type="term" value="F:4-hydroxy-tetrahydrodipicolinate synthase activity"/>
    <property type="evidence" value="ECO:0007669"/>
    <property type="project" value="TreeGrafter"/>
</dbReference>
<dbReference type="GO" id="GO:0044281">
    <property type="term" value="P:small molecule metabolic process"/>
    <property type="evidence" value="ECO:0007669"/>
    <property type="project" value="UniProtKB-ARBA"/>
</dbReference>
<dbReference type="CDD" id="cd00408">
    <property type="entry name" value="DHDPS-like"/>
    <property type="match status" value="1"/>
</dbReference>
<dbReference type="Gene3D" id="3.20.20.70">
    <property type="entry name" value="Aldolase class I"/>
    <property type="match status" value="1"/>
</dbReference>
<dbReference type="InterPro" id="IPR013785">
    <property type="entry name" value="Aldolase_TIM"/>
</dbReference>
<dbReference type="InterPro" id="IPR002220">
    <property type="entry name" value="DapA-like"/>
</dbReference>
<dbReference type="InterPro" id="IPR020625">
    <property type="entry name" value="Schiff_base-form_aldolases_AS"/>
</dbReference>
<dbReference type="PANTHER" id="PTHR12128:SF66">
    <property type="entry name" value="4-HYDROXY-2-OXOGLUTARATE ALDOLASE, MITOCHONDRIAL"/>
    <property type="match status" value="1"/>
</dbReference>
<dbReference type="PANTHER" id="PTHR12128">
    <property type="entry name" value="DIHYDRODIPICOLINATE SYNTHASE"/>
    <property type="match status" value="1"/>
</dbReference>
<dbReference type="Pfam" id="PF00701">
    <property type="entry name" value="DHDPS"/>
    <property type="match status" value="1"/>
</dbReference>
<dbReference type="PIRSF" id="PIRSF001365">
    <property type="entry name" value="DHDPS"/>
    <property type="match status" value="1"/>
</dbReference>
<dbReference type="PRINTS" id="PR00146">
    <property type="entry name" value="DHPICSNTHASE"/>
</dbReference>
<dbReference type="SMART" id="SM01130">
    <property type="entry name" value="DHDPS"/>
    <property type="match status" value="1"/>
</dbReference>
<dbReference type="SUPFAM" id="SSF51569">
    <property type="entry name" value="Aldolase"/>
    <property type="match status" value="1"/>
</dbReference>
<dbReference type="PROSITE" id="PS00666">
    <property type="entry name" value="DHDPS_2"/>
    <property type="match status" value="1"/>
</dbReference>
<accession>Q9HJ17</accession>
<keyword id="KW-0963">Cytoplasm</keyword>
<keyword id="KW-0456">Lyase</keyword>
<keyword id="KW-1185">Reference proteome</keyword>
<keyword id="KW-0704">Schiff base</keyword>
<protein>
    <recommendedName>
        <fullName>Uncharacterized DapA-like lyase Ta1157</fullName>
        <ecNumber>4.-.-.-</ecNumber>
    </recommendedName>
</protein>
<name>DAPAL_THEAC</name>
<comment type="subunit">
    <text evidence="1">Homotetramer.</text>
</comment>
<comment type="subcellular location">
    <subcellularLocation>
        <location evidence="2">Cytoplasm</location>
    </subcellularLocation>
</comment>
<comment type="similarity">
    <text evidence="2">Belongs to the DapA family.</text>
</comment>
<evidence type="ECO:0000250" key="1"/>
<evidence type="ECO:0000305" key="2"/>
<organism>
    <name type="scientific">Thermoplasma acidophilum (strain ATCC 25905 / DSM 1728 / JCM 9062 / NBRC 15155 / AMRC-C165)</name>
    <dbReference type="NCBI Taxonomy" id="273075"/>
    <lineage>
        <taxon>Archaea</taxon>
        <taxon>Methanobacteriati</taxon>
        <taxon>Thermoplasmatota</taxon>
        <taxon>Thermoplasmata</taxon>
        <taxon>Thermoplasmatales</taxon>
        <taxon>Thermoplasmataceae</taxon>
        <taxon>Thermoplasma</taxon>
    </lineage>
</organism>
<reference key="1">
    <citation type="journal article" date="2000" name="Nature">
        <title>The genome sequence of the thermoacidophilic scavenger Thermoplasma acidophilum.</title>
        <authorList>
            <person name="Ruepp A."/>
            <person name="Graml W."/>
            <person name="Santos-Martinez M.-L."/>
            <person name="Koretke K.K."/>
            <person name="Volker C."/>
            <person name="Mewes H.-W."/>
            <person name="Frishman D."/>
            <person name="Stocker S."/>
            <person name="Lupas A.N."/>
            <person name="Baumeister W."/>
        </authorList>
    </citation>
    <scope>NUCLEOTIDE SEQUENCE [LARGE SCALE GENOMIC DNA]</scope>
    <source>
        <strain>ATCC 25905 / DSM 1728 / JCM 9062 / NBRC 15155 / AMRC-C165</strain>
    </source>
</reference>
<gene>
    <name type="primary">dapAL</name>
    <name type="ordered locus">Ta1157</name>
</gene>
<feature type="chain" id="PRO_0000103207" description="Uncharacterized DapA-like lyase Ta1157">
    <location>
        <begin position="1"/>
        <end position="292"/>
    </location>
</feature>
<feature type="active site" description="Charge relay system" evidence="1">
    <location>
        <position position="44"/>
    </location>
</feature>
<feature type="active site" description="Charge relay system" evidence="1">
    <location>
        <position position="106"/>
    </location>
</feature>
<feature type="active site" description="Proton donor" evidence="1">
    <location>
        <position position="132"/>
    </location>
</feature>
<feature type="active site" description="Schiff-base intermediate with substrate" evidence="1">
    <location>
        <position position="161"/>
    </location>
</feature>
<proteinExistence type="inferred from homology"/>
<sequence>MYKGIVTPMITPMGQNGEIDYRATEILIDNLADFGVDGLFPMGSTGLFPMFSTDEKKKFLGFVRDHSKKIEVYAGVGSSSTQESVELSKYTEDIGIKVRVLMPTYYIKPDEDWMYRHFSTVISAASNDLFIYNIPQLSGSWISESLIEKLTREFSNVKGIKDSSGDMRFFSRIIRHKNEKFDIFQGQDDLLFLSLSIGASGGVCGLSNISPYITNLYHEFSAGNLEKARKIQIDEVNPLMYAINEATFPAGYYYAFYKMNGIKGGYRAPMVEPTTDQKKKIDQELTKIPKKQ</sequence>